<keyword id="KW-0007">Acetylation</keyword>
<keyword id="KW-0963">Cytoplasm</keyword>
<keyword id="KW-0206">Cytoskeleton</keyword>
<keyword id="KW-0378">Hydrolase</keyword>
<keyword id="KW-0464">Manganese</keyword>
<keyword id="KW-0479">Metal-binding</keyword>
<keyword id="KW-0488">Methylation</keyword>
<keyword id="KW-0539">Nucleus</keyword>
<keyword id="KW-0904">Protein phosphatase</keyword>
<keyword id="KW-1185">Reference proteome</keyword>
<accession>P11084</accession>
<sequence>MAEISDLDRQIEQLLRCELIKESEVKALCAKAREILVEESNVQRVDSPVTVCGDIHGQFYDLKELFRVGGDVPETNYLFMGDFVDRGFYSVETFLLLLALKVRYPDRITLIRGNHESRQITQVYGFYDECLRKYGSVTVWRYCTEIFDYLSLSAIIDGKIFCVHGGLSPSIQTLDQIRTIDRKQEVPHDGPMCDLLWSDPEDTTGWGVSPRGAGYLFGSDVVAQFNAANDIDMICRAHQLVMEGYKWHFNETVLTVWSAPNYCYRCGNVAAILELDEHLQKDFIIFEAAPQETRGIPSKKPVADYFL</sequence>
<evidence type="ECO:0000250" key="1"/>
<evidence type="ECO:0000250" key="2">
    <source>
        <dbReference type="UniProtKB" id="P60510"/>
    </source>
</evidence>
<evidence type="ECO:0000269" key="3">
    <source>
    </source>
</evidence>
<evidence type="ECO:0000305" key="4"/>
<name>PP4C_RABIT</name>
<protein>
    <recommendedName>
        <fullName>Serine/threonine-protein phosphatase 4 catalytic subunit</fullName>
        <shortName>PP4C</shortName>
        <shortName>Pp4</shortName>
        <ecNumber>3.1.3.16</ecNumber>
    </recommendedName>
    <alternativeName>
        <fullName>Protein phosphatase X</fullName>
        <shortName>PP-X</shortName>
    </alternativeName>
</protein>
<feature type="initiator methionine" description="Removed" evidence="2">
    <location>
        <position position="1"/>
    </location>
</feature>
<feature type="chain" id="PRO_0000058885" description="Serine/threonine-protein phosphatase 4 catalytic subunit">
    <location>
        <begin position="2"/>
        <end position="307"/>
    </location>
</feature>
<feature type="active site" description="Proton donor" evidence="1">
    <location>
        <position position="115"/>
    </location>
</feature>
<feature type="binding site" evidence="1">
    <location>
        <position position="54"/>
    </location>
    <ligand>
        <name>Mn(2+)</name>
        <dbReference type="ChEBI" id="CHEBI:29035"/>
        <label>1</label>
    </ligand>
</feature>
<feature type="binding site" evidence="1">
    <location>
        <position position="56"/>
    </location>
    <ligand>
        <name>Mn(2+)</name>
        <dbReference type="ChEBI" id="CHEBI:29035"/>
        <label>1</label>
    </ligand>
</feature>
<feature type="binding site" evidence="1">
    <location>
        <position position="82"/>
    </location>
    <ligand>
        <name>Mn(2+)</name>
        <dbReference type="ChEBI" id="CHEBI:29035"/>
        <label>1</label>
    </ligand>
</feature>
<feature type="binding site" evidence="1">
    <location>
        <position position="82"/>
    </location>
    <ligand>
        <name>Mn(2+)</name>
        <dbReference type="ChEBI" id="CHEBI:29035"/>
        <label>2</label>
    </ligand>
</feature>
<feature type="binding site" evidence="1">
    <location>
        <position position="114"/>
    </location>
    <ligand>
        <name>Mn(2+)</name>
        <dbReference type="ChEBI" id="CHEBI:29035"/>
        <label>2</label>
    </ligand>
</feature>
<feature type="binding site" evidence="1">
    <location>
        <position position="164"/>
    </location>
    <ligand>
        <name>Mn(2+)</name>
        <dbReference type="ChEBI" id="CHEBI:29035"/>
        <label>2</label>
    </ligand>
</feature>
<feature type="binding site" evidence="1">
    <location>
        <position position="238"/>
    </location>
    <ligand>
        <name>Mn(2+)</name>
        <dbReference type="ChEBI" id="CHEBI:29035"/>
        <label>2</label>
    </ligand>
</feature>
<feature type="modified residue" description="N-acetylalanine" evidence="2">
    <location>
        <position position="2"/>
    </location>
</feature>
<feature type="modified residue" description="Leucine methyl ester" evidence="3">
    <location>
        <position position="307"/>
    </location>
</feature>
<dbReference type="EC" id="3.1.3.16"/>
<dbReference type="EMBL" id="X14031">
    <property type="protein sequence ID" value="CAA32191.1"/>
    <property type="molecule type" value="mRNA"/>
</dbReference>
<dbReference type="EMBL" id="S57412">
    <property type="protein sequence ID" value="AAB25913.1"/>
    <property type="molecule type" value="mRNA"/>
</dbReference>
<dbReference type="PIR" id="S36193">
    <property type="entry name" value="PARBA2"/>
</dbReference>
<dbReference type="RefSeq" id="NP_001075792.1">
    <property type="nucleotide sequence ID" value="NM_001082323.1"/>
</dbReference>
<dbReference type="SMR" id="P11084"/>
<dbReference type="STRING" id="9986.ENSOCUP00000005480"/>
<dbReference type="PaxDb" id="9986-ENSOCUP00000005480"/>
<dbReference type="GeneID" id="100009163"/>
<dbReference type="KEGG" id="ocu:100009163"/>
<dbReference type="CTD" id="5531"/>
<dbReference type="eggNOG" id="KOG0372">
    <property type="taxonomic scope" value="Eukaryota"/>
</dbReference>
<dbReference type="InParanoid" id="P11084"/>
<dbReference type="OrthoDB" id="1930084at2759"/>
<dbReference type="Proteomes" id="UP000001811">
    <property type="component" value="Unplaced"/>
</dbReference>
<dbReference type="GO" id="GO:0005813">
    <property type="term" value="C:centrosome"/>
    <property type="evidence" value="ECO:0007669"/>
    <property type="project" value="UniProtKB-SubCell"/>
</dbReference>
<dbReference type="GO" id="GO:0005737">
    <property type="term" value="C:cytoplasm"/>
    <property type="evidence" value="ECO:0007669"/>
    <property type="project" value="UniProtKB-SubCell"/>
</dbReference>
<dbReference type="GO" id="GO:0005634">
    <property type="term" value="C:nucleus"/>
    <property type="evidence" value="ECO:0007669"/>
    <property type="project" value="UniProtKB-SubCell"/>
</dbReference>
<dbReference type="GO" id="GO:0046872">
    <property type="term" value="F:metal ion binding"/>
    <property type="evidence" value="ECO:0007669"/>
    <property type="project" value="UniProtKB-KW"/>
</dbReference>
<dbReference type="GO" id="GO:0004722">
    <property type="term" value="F:protein serine/threonine phosphatase activity"/>
    <property type="evidence" value="ECO:0000250"/>
    <property type="project" value="UniProtKB"/>
</dbReference>
<dbReference type="GO" id="GO:0010569">
    <property type="term" value="P:regulation of double-strand break repair via homologous recombination"/>
    <property type="evidence" value="ECO:0000250"/>
    <property type="project" value="UniProtKB"/>
</dbReference>
<dbReference type="CDD" id="cd07415">
    <property type="entry name" value="MPP_PP2A_PP4_PP6"/>
    <property type="match status" value="1"/>
</dbReference>
<dbReference type="FunFam" id="3.60.21.10:FF:000010">
    <property type="entry name" value="Serine/threonine-protein phosphatase"/>
    <property type="match status" value="1"/>
</dbReference>
<dbReference type="Gene3D" id="3.60.21.10">
    <property type="match status" value="1"/>
</dbReference>
<dbReference type="InterPro" id="IPR004843">
    <property type="entry name" value="Calcineurin-like_PHP_ApaH"/>
</dbReference>
<dbReference type="InterPro" id="IPR029052">
    <property type="entry name" value="Metallo-depent_PP-like"/>
</dbReference>
<dbReference type="InterPro" id="IPR047129">
    <property type="entry name" value="PPA2-like"/>
</dbReference>
<dbReference type="InterPro" id="IPR006186">
    <property type="entry name" value="Ser/Thr-sp_prot-phosphatase"/>
</dbReference>
<dbReference type="PANTHER" id="PTHR45619">
    <property type="entry name" value="SERINE/THREONINE-PROTEIN PHOSPHATASE PP2A-RELATED"/>
    <property type="match status" value="1"/>
</dbReference>
<dbReference type="Pfam" id="PF00149">
    <property type="entry name" value="Metallophos"/>
    <property type="match status" value="1"/>
</dbReference>
<dbReference type="PRINTS" id="PR00114">
    <property type="entry name" value="STPHPHTASE"/>
</dbReference>
<dbReference type="SMART" id="SM00156">
    <property type="entry name" value="PP2Ac"/>
    <property type="match status" value="1"/>
</dbReference>
<dbReference type="SUPFAM" id="SSF56300">
    <property type="entry name" value="Metallo-dependent phosphatases"/>
    <property type="match status" value="1"/>
</dbReference>
<dbReference type="PROSITE" id="PS00125">
    <property type="entry name" value="SER_THR_PHOSPHATASE"/>
    <property type="match status" value="1"/>
</dbReference>
<gene>
    <name type="primary">PPP4C</name>
</gene>
<proteinExistence type="evidence at protein level"/>
<reference key="1">
    <citation type="journal article" date="1990" name="FEBS Lett.">
        <title>Protein serine/threonine phosphatases; an expanding family.</title>
        <authorList>
            <person name="Cohen P.T.W."/>
            <person name="Brewis N.D."/>
            <person name="Hughes V."/>
            <person name="Mann D.J."/>
        </authorList>
    </citation>
    <scope>NUCLEOTIDE SEQUENCE [MRNA]</scope>
    <source>
        <strain>New Zealand white</strain>
        <tissue>Liver</tissue>
    </source>
</reference>
<reference key="2">
    <citation type="journal article" date="1993" name="EMBO J.">
        <title>PPX, a novel protein serine/threonine phosphatase localized to centrosomes.</title>
        <authorList>
            <person name="Brewis N.D."/>
            <person name="Street A.J."/>
            <person name="Prescott A.R."/>
            <person name="Cohen P.T.W."/>
        </authorList>
    </citation>
    <scope>NUCLEOTIDE SEQUENCE [MRNA]</scope>
    <source>
        <strain>New Zealand white</strain>
        <tissue>Liver</tissue>
    </source>
</reference>
<reference key="3">
    <citation type="journal article" date="1988" name="FEBS Lett.">
        <title>Identification of a novel protein phosphatase catalytic subunit by cDNA cloning.</title>
        <authorList>
            <person name="da Cruz e Silva O.B."/>
            <person name="da Cruz e Silva E.F."/>
            <person name="Cohen P.T.W."/>
        </authorList>
    </citation>
    <scope>NUCLEOTIDE SEQUENCE [MRNA] OF 105-307</scope>
    <source>
        <strain>New Zealand white</strain>
        <tissue>Liver</tissue>
    </source>
</reference>
<reference key="4">
    <citation type="journal article" date="1997" name="Biochem. J.">
        <title>Carboxymethylation of nuclear protein serine/threonine phosphatase X.</title>
        <authorList>
            <person name="Kloeker S."/>
            <person name="Bryant J.C."/>
            <person name="Strack S."/>
            <person name="Colbran R.J."/>
            <person name="Wadzinski B.E."/>
        </authorList>
    </citation>
    <scope>METHYLATION AT LEU-307</scope>
</reference>
<reference key="5">
    <citation type="journal article" date="2000" name="Biochem. J.">
        <title>A novel 50 kDa protein forms complexes with protein phosphatase 4 and is located at centrosomal microtubule organizing centres.</title>
        <authorList>
            <person name="Hastie C.J."/>
            <person name="Carnegie G.K."/>
            <person name="Morrice N."/>
            <person name="Cohen P.T.W."/>
        </authorList>
    </citation>
    <scope>INTERACTION WITH PPP4R2</scope>
</reference>
<organism>
    <name type="scientific">Oryctolagus cuniculus</name>
    <name type="common">Rabbit</name>
    <dbReference type="NCBI Taxonomy" id="9986"/>
    <lineage>
        <taxon>Eukaryota</taxon>
        <taxon>Metazoa</taxon>
        <taxon>Chordata</taxon>
        <taxon>Craniata</taxon>
        <taxon>Vertebrata</taxon>
        <taxon>Euteleostomi</taxon>
        <taxon>Mammalia</taxon>
        <taxon>Eutheria</taxon>
        <taxon>Euarchontoglires</taxon>
        <taxon>Glires</taxon>
        <taxon>Lagomorpha</taxon>
        <taxon>Leporidae</taxon>
        <taxon>Oryctolagus</taxon>
    </lineage>
</organism>
<comment type="function">
    <text evidence="1">Protein phosphatase that is involved in many processes such as microtubule organization at centrosomes, maturation of spliceosomal snRNPs, apoptosis, DNA repair, tumor necrosis factor (TNF)-alpha signaling, activation of c-Jun N-terminal kinase MAPK8, regulation of histone acetylation, DNA damage checkpoint signaling, NF-kappa-B activation and cell migration. The PPP4C-PPP4R1 PP4 complex may play a role in dephosphorylation and regulation of HDAC3. The PPP4C-PPP4R2-PPP4R3A PP4 complex specifically dephosphorylates H2AX phosphorylated on Ser-140 (gamma-H2AX) generated during DNA replication and required for DNA DSB repair. Dephosphorylates NDEL1 at CDK1 phosphorylation sites and negatively regulates CDK1 activity in interphase (By similarity). In response to DNA damage, catalyzes RPA2 dephosphorylation, an essential step for DNA repair since it allows the efficient RPA2-mediated recruitment of RAD51 to chromatin (By similarity).</text>
</comment>
<comment type="catalytic activity">
    <reaction>
        <text>O-phospho-L-seryl-[protein] + H2O = L-seryl-[protein] + phosphate</text>
        <dbReference type="Rhea" id="RHEA:20629"/>
        <dbReference type="Rhea" id="RHEA-COMP:9863"/>
        <dbReference type="Rhea" id="RHEA-COMP:11604"/>
        <dbReference type="ChEBI" id="CHEBI:15377"/>
        <dbReference type="ChEBI" id="CHEBI:29999"/>
        <dbReference type="ChEBI" id="CHEBI:43474"/>
        <dbReference type="ChEBI" id="CHEBI:83421"/>
        <dbReference type="EC" id="3.1.3.16"/>
    </reaction>
</comment>
<comment type="catalytic activity">
    <reaction>
        <text>O-phospho-L-threonyl-[protein] + H2O = L-threonyl-[protein] + phosphate</text>
        <dbReference type="Rhea" id="RHEA:47004"/>
        <dbReference type="Rhea" id="RHEA-COMP:11060"/>
        <dbReference type="Rhea" id="RHEA-COMP:11605"/>
        <dbReference type="ChEBI" id="CHEBI:15377"/>
        <dbReference type="ChEBI" id="CHEBI:30013"/>
        <dbReference type="ChEBI" id="CHEBI:43474"/>
        <dbReference type="ChEBI" id="CHEBI:61977"/>
        <dbReference type="EC" id="3.1.3.16"/>
    </reaction>
</comment>
<comment type="cofactor">
    <cofactor evidence="1">
        <name>Mn(2+)</name>
        <dbReference type="ChEBI" id="CHEBI:29035"/>
    </cofactor>
    <text evidence="1">Binds 2 manganese ions per subunit.</text>
</comment>
<comment type="subunit">
    <text evidence="1">Serine/threonine-protein phosphatase 4 (PP4) occurs in different assemblies of the catalytic and one or more regulatory subunits. Component of the PP4 complexes PPP4C-PPP4R1, PPP4C-PPP4R2, PPP4C-PPP4R2-PPP4R3A, PPP4C-PPP4R2-PPP4R3B and PPP4C-PPP4R4. The PPP4C-PPP4R2 complex appears to be a tetramer composed of 2 molecules of PPP4C and 2 molecules of PPP4R2. Interacts with REL, NFKB1/p50 and RELA. Interacts with SMN1 and GEMIN4. Interacts with IRS4 (phosphorylated). Interacts with SMEK1/PPP4R3A; the interaction requires PP4R2. Interacts with HDAC3 (By similarity).</text>
</comment>
<comment type="subcellular location">
    <subcellularLocation>
        <location>Cytoplasm</location>
    </subcellularLocation>
    <subcellularLocation>
        <location>Nucleus</location>
    </subcellularLocation>
    <subcellularLocation>
        <location>Cytoplasm</location>
        <location>Cytoskeleton</location>
        <location>Microtubule organizing center</location>
        <location>Centrosome</location>
    </subcellularLocation>
</comment>
<comment type="PTM">
    <text evidence="2">Methylation at the C-terminal Leu-307 is critical for interactions with regulatory subunits and functions in DNA repair.</text>
</comment>
<comment type="similarity">
    <text evidence="4">Belongs to the PPP phosphatase family. PP-4 (PP-X) subfamily.</text>
</comment>